<accession>C3PGI6</accession>
<evidence type="ECO:0000255" key="1">
    <source>
        <dbReference type="HAMAP-Rule" id="MF_00173"/>
    </source>
</evidence>
<organism>
    <name type="scientific">Corynebacterium aurimucosum (strain ATCC 700975 / DSM 44827 / CIP 107346 / CN-1)</name>
    <name type="common">Corynebacterium nigricans</name>
    <dbReference type="NCBI Taxonomy" id="548476"/>
    <lineage>
        <taxon>Bacteria</taxon>
        <taxon>Bacillati</taxon>
        <taxon>Actinomycetota</taxon>
        <taxon>Actinomycetes</taxon>
        <taxon>Mycobacteriales</taxon>
        <taxon>Corynebacteriaceae</taxon>
        <taxon>Corynebacterium</taxon>
    </lineage>
</organism>
<protein>
    <recommendedName>
        <fullName evidence="1">Arginine repressor</fullName>
    </recommendedName>
</protein>
<reference key="1">
    <citation type="journal article" date="2010" name="BMC Genomics">
        <title>Complete genome sequence and lifestyle of black-pigmented Corynebacterium aurimucosum ATCC 700975 (formerly C. nigricans CN-1) isolated from a vaginal swab of a woman with spontaneous abortion.</title>
        <authorList>
            <person name="Trost E."/>
            <person name="Gotker S."/>
            <person name="Schneider J."/>
            <person name="Schneiker-Bekel S."/>
            <person name="Szczepanowski R."/>
            <person name="Tilker A."/>
            <person name="Viehoever P."/>
            <person name="Arnold W."/>
            <person name="Bekel T."/>
            <person name="Blom J."/>
            <person name="Gartemann K.H."/>
            <person name="Linke B."/>
            <person name="Goesmann A."/>
            <person name="Puhler A."/>
            <person name="Shukla S.K."/>
            <person name="Tauch A."/>
        </authorList>
    </citation>
    <scope>NUCLEOTIDE SEQUENCE [LARGE SCALE GENOMIC DNA]</scope>
    <source>
        <strain>ATCC 700975 / DSM 44827 / CIP 107346 / CN-1</strain>
    </source>
</reference>
<gene>
    <name evidence="1" type="primary">argR</name>
    <name type="ordered locus">cauri_1347</name>
</gene>
<dbReference type="EMBL" id="CP001601">
    <property type="protein sequence ID" value="ACP32940.1"/>
    <property type="molecule type" value="Genomic_DNA"/>
</dbReference>
<dbReference type="RefSeq" id="WP_010190051.1">
    <property type="nucleotide sequence ID" value="NC_012590.1"/>
</dbReference>
<dbReference type="SMR" id="C3PGI6"/>
<dbReference type="STRING" id="548476.cauri_1347"/>
<dbReference type="GeneID" id="31923973"/>
<dbReference type="KEGG" id="car:cauri_1347"/>
<dbReference type="eggNOG" id="COG1438">
    <property type="taxonomic scope" value="Bacteria"/>
</dbReference>
<dbReference type="HOGENOM" id="CLU_097103_1_1_11"/>
<dbReference type="OrthoDB" id="7060358at2"/>
<dbReference type="UniPathway" id="UPA00068"/>
<dbReference type="Proteomes" id="UP000002077">
    <property type="component" value="Chromosome"/>
</dbReference>
<dbReference type="GO" id="GO:0005737">
    <property type="term" value="C:cytoplasm"/>
    <property type="evidence" value="ECO:0007669"/>
    <property type="project" value="UniProtKB-SubCell"/>
</dbReference>
<dbReference type="GO" id="GO:0034618">
    <property type="term" value="F:arginine binding"/>
    <property type="evidence" value="ECO:0007669"/>
    <property type="project" value="InterPro"/>
</dbReference>
<dbReference type="GO" id="GO:0003677">
    <property type="term" value="F:DNA binding"/>
    <property type="evidence" value="ECO:0007669"/>
    <property type="project" value="UniProtKB-KW"/>
</dbReference>
<dbReference type="GO" id="GO:0003700">
    <property type="term" value="F:DNA-binding transcription factor activity"/>
    <property type="evidence" value="ECO:0007669"/>
    <property type="project" value="UniProtKB-UniRule"/>
</dbReference>
<dbReference type="GO" id="GO:0006526">
    <property type="term" value="P:L-arginine biosynthetic process"/>
    <property type="evidence" value="ECO:0007669"/>
    <property type="project" value="UniProtKB-UniPathway"/>
</dbReference>
<dbReference type="GO" id="GO:0051259">
    <property type="term" value="P:protein complex oligomerization"/>
    <property type="evidence" value="ECO:0007669"/>
    <property type="project" value="InterPro"/>
</dbReference>
<dbReference type="GO" id="GO:1900079">
    <property type="term" value="P:regulation of arginine biosynthetic process"/>
    <property type="evidence" value="ECO:0007669"/>
    <property type="project" value="UniProtKB-UniRule"/>
</dbReference>
<dbReference type="Gene3D" id="3.30.1360.40">
    <property type="match status" value="1"/>
</dbReference>
<dbReference type="Gene3D" id="1.10.10.10">
    <property type="entry name" value="Winged helix-like DNA-binding domain superfamily/Winged helix DNA-binding domain"/>
    <property type="match status" value="1"/>
</dbReference>
<dbReference type="HAMAP" id="MF_00173">
    <property type="entry name" value="Arg_repressor"/>
    <property type="match status" value="1"/>
</dbReference>
<dbReference type="InterPro" id="IPR001669">
    <property type="entry name" value="Arg_repress"/>
</dbReference>
<dbReference type="InterPro" id="IPR020899">
    <property type="entry name" value="Arg_repress_C"/>
</dbReference>
<dbReference type="InterPro" id="IPR036251">
    <property type="entry name" value="Arg_repress_C_sf"/>
</dbReference>
<dbReference type="InterPro" id="IPR020900">
    <property type="entry name" value="Arg_repress_DNA-bd"/>
</dbReference>
<dbReference type="InterPro" id="IPR036388">
    <property type="entry name" value="WH-like_DNA-bd_sf"/>
</dbReference>
<dbReference type="InterPro" id="IPR036390">
    <property type="entry name" value="WH_DNA-bd_sf"/>
</dbReference>
<dbReference type="NCBIfam" id="NF002880">
    <property type="entry name" value="PRK03341.1"/>
    <property type="match status" value="1"/>
</dbReference>
<dbReference type="PANTHER" id="PTHR34471">
    <property type="entry name" value="ARGININE REPRESSOR"/>
    <property type="match status" value="1"/>
</dbReference>
<dbReference type="PANTHER" id="PTHR34471:SF1">
    <property type="entry name" value="ARGININE REPRESSOR"/>
    <property type="match status" value="1"/>
</dbReference>
<dbReference type="Pfam" id="PF01316">
    <property type="entry name" value="Arg_repressor"/>
    <property type="match status" value="1"/>
</dbReference>
<dbReference type="Pfam" id="PF02863">
    <property type="entry name" value="Arg_repressor_C"/>
    <property type="match status" value="1"/>
</dbReference>
<dbReference type="PRINTS" id="PR01467">
    <property type="entry name" value="ARGREPRESSOR"/>
</dbReference>
<dbReference type="SUPFAM" id="SSF55252">
    <property type="entry name" value="C-terminal domain of arginine repressor"/>
    <property type="match status" value="1"/>
</dbReference>
<dbReference type="SUPFAM" id="SSF46785">
    <property type="entry name" value="Winged helix' DNA-binding domain"/>
    <property type="match status" value="1"/>
</dbReference>
<feature type="chain" id="PRO_1000123792" description="Arginine repressor">
    <location>
        <begin position="1"/>
        <end position="161"/>
    </location>
</feature>
<keyword id="KW-0028">Amino-acid biosynthesis</keyword>
<keyword id="KW-0055">Arginine biosynthesis</keyword>
<keyword id="KW-0963">Cytoplasm</keyword>
<keyword id="KW-0238">DNA-binding</keyword>
<keyword id="KW-1185">Reference proteome</keyword>
<keyword id="KW-0678">Repressor</keyword>
<keyword id="KW-0804">Transcription</keyword>
<keyword id="KW-0805">Transcription regulation</keyword>
<comment type="function">
    <text evidence="1">Regulates arginine biosynthesis genes.</text>
</comment>
<comment type="pathway">
    <text>Amino-acid biosynthesis; L-arginine biosynthesis [regulation].</text>
</comment>
<comment type="subcellular location">
    <subcellularLocation>
        <location evidence="1">Cytoplasm</location>
    </subcellularLocation>
</comment>
<comment type="similarity">
    <text evidence="1">Belongs to the ArgR family.</text>
</comment>
<name>ARGR_CORA7</name>
<sequence length="161" mass="17660">MTTTPTTRNARQAKILEILDRTRVTSQVQLSELLLDEGIDITQATLSRDLDELGAKKVKRDGGRSFYVVGGELEQFEDQLNGPREKLRRMLDELVVSHDFSGNIAMLRTPAGAAQYLASFIDRVGLPDVVGCIAGDDTIFVLAREGLGGRELAEKLTSRGI</sequence>
<proteinExistence type="inferred from homology"/>